<sequence length="451" mass="51141">MGLKNLIIRGRNYISDHLTKSSLEKAIIRRQKRGKVIENEKLIILGCGWGSYSFLKNLNSIKYDITVISPRNHFLFTPLLTSSAVGTLEFRSIAEPVRTTRDINEFKYIQASVTSINPENNSVLVKSTFHNEKPFEMKYDKLVIGVGSRNNTFGIKGVEENANFLKELHHAREIRQKIIECFERASLPDVSTEERERLLSFVIVGGGATGIEFTSELNDFFSEDLSRLFPFVPVNEVKIILLEASGKILSTFDQKLVKKALINFRNSGIDVRTHSSVKEVLKDYVILDNGDRIPYGLLVWSTGIGQHPLVKNSSFEKDSHDRIIVDDHLRVKNYSNVFSFGDCANVENKNYPPTAQVASQSAVYLAKEFNNLEKLNPNPPKPFAFKFLGLLAYTGKKSGILQTDFFDLSGFIGFITWRSAYLTRLGSLRSKIQVPFDWMRTLIFGRDISSF</sequence>
<dbReference type="EC" id="7.1.1.2"/>
<dbReference type="EMBL" id="AAFI02000005">
    <property type="protein sequence ID" value="EAL72402.2"/>
    <property type="molecule type" value="Genomic_DNA"/>
</dbReference>
<dbReference type="RefSeq" id="XP_646542.2">
    <property type="nucleotide sequence ID" value="XM_641450.2"/>
</dbReference>
<dbReference type="SMR" id="Q55CD9"/>
<dbReference type="FunCoup" id="Q55CD9">
    <property type="interactions" value="1"/>
</dbReference>
<dbReference type="STRING" id="44689.Q55CD9"/>
<dbReference type="PaxDb" id="44689-DDB0238855"/>
<dbReference type="EnsemblProtists" id="EAL72402">
    <property type="protein sequence ID" value="EAL72402"/>
    <property type="gene ID" value="DDB_G0270104"/>
</dbReference>
<dbReference type="GeneID" id="8617508"/>
<dbReference type="KEGG" id="ddi:DDB_G0270104"/>
<dbReference type="dictyBase" id="DDB_G0270104"/>
<dbReference type="VEuPathDB" id="AmoebaDB:DDB_G0270104"/>
<dbReference type="eggNOG" id="KOG2495">
    <property type="taxonomic scope" value="Eukaryota"/>
</dbReference>
<dbReference type="HOGENOM" id="CLU_021377_1_3_1"/>
<dbReference type="InParanoid" id="Q55CD9"/>
<dbReference type="OMA" id="DHCIFLD"/>
<dbReference type="PhylomeDB" id="Q55CD9"/>
<dbReference type="PRO" id="PR:Q55CD9"/>
<dbReference type="Proteomes" id="UP000002195">
    <property type="component" value="Chromosome 1"/>
</dbReference>
<dbReference type="GO" id="GO:0005739">
    <property type="term" value="C:mitochondrion"/>
    <property type="evidence" value="ECO:0000318"/>
    <property type="project" value="GO_Central"/>
</dbReference>
<dbReference type="GO" id="GO:0008137">
    <property type="term" value="F:NADH dehydrogenase (ubiquinone) activity"/>
    <property type="evidence" value="ECO:0007669"/>
    <property type="project" value="UniProtKB-EC"/>
</dbReference>
<dbReference type="GO" id="GO:0016491">
    <property type="term" value="F:oxidoreductase activity"/>
    <property type="evidence" value="ECO:0000318"/>
    <property type="project" value="GO_Central"/>
</dbReference>
<dbReference type="Gene3D" id="3.50.50.100">
    <property type="match status" value="1"/>
</dbReference>
<dbReference type="InterPro" id="IPR036188">
    <property type="entry name" value="FAD/NAD-bd_sf"/>
</dbReference>
<dbReference type="InterPro" id="IPR023753">
    <property type="entry name" value="FAD/NAD-binding_dom"/>
</dbReference>
<dbReference type="InterPro" id="IPR045024">
    <property type="entry name" value="NDH-2"/>
</dbReference>
<dbReference type="InterPro" id="IPR054585">
    <property type="entry name" value="NDH2-like_C"/>
</dbReference>
<dbReference type="PANTHER" id="PTHR43706">
    <property type="entry name" value="NADH DEHYDROGENASE"/>
    <property type="match status" value="1"/>
</dbReference>
<dbReference type="PANTHER" id="PTHR43706:SF13">
    <property type="entry name" value="NADH DEHYDROGENASE-RELATED"/>
    <property type="match status" value="1"/>
</dbReference>
<dbReference type="Pfam" id="PF22366">
    <property type="entry name" value="NDH2_C"/>
    <property type="match status" value="1"/>
</dbReference>
<dbReference type="Pfam" id="PF07992">
    <property type="entry name" value="Pyr_redox_2"/>
    <property type="match status" value="1"/>
</dbReference>
<dbReference type="PRINTS" id="PR00368">
    <property type="entry name" value="FADPNR"/>
</dbReference>
<dbReference type="SUPFAM" id="SSF51905">
    <property type="entry name" value="FAD/NAD(P)-binding domain"/>
    <property type="match status" value="2"/>
</dbReference>
<proteinExistence type="inferred from homology"/>
<comment type="catalytic activity">
    <reaction>
        <text>a ubiquinone + NADH + 5 H(+)(in) = a ubiquinol + NAD(+) + 4 H(+)(out)</text>
        <dbReference type="Rhea" id="RHEA:29091"/>
        <dbReference type="Rhea" id="RHEA-COMP:9565"/>
        <dbReference type="Rhea" id="RHEA-COMP:9566"/>
        <dbReference type="ChEBI" id="CHEBI:15378"/>
        <dbReference type="ChEBI" id="CHEBI:16389"/>
        <dbReference type="ChEBI" id="CHEBI:17976"/>
        <dbReference type="ChEBI" id="CHEBI:57540"/>
        <dbReference type="ChEBI" id="CHEBI:57945"/>
        <dbReference type="EC" id="7.1.1.2"/>
    </reaction>
</comment>
<comment type="cofactor">
    <cofactor evidence="1">
        <name>FAD</name>
        <dbReference type="ChEBI" id="CHEBI:57692"/>
    </cofactor>
</comment>
<comment type="similarity">
    <text evidence="2">Belongs to the NADH dehydrogenase family.</text>
</comment>
<feature type="chain" id="PRO_0000327518" description="Probable NADH dehydrogenase">
    <location>
        <begin position="1"/>
        <end position="451"/>
    </location>
</feature>
<feature type="binding site" evidence="1">
    <location>
        <begin position="41"/>
        <end position="71"/>
    </location>
    <ligand>
        <name>FAD</name>
        <dbReference type="ChEBI" id="CHEBI:57692"/>
    </ligand>
</feature>
<feature type="binding site" evidence="1">
    <location>
        <begin position="199"/>
        <end position="236"/>
    </location>
    <ligand>
        <name>NAD(+)</name>
        <dbReference type="ChEBI" id="CHEBI:57540"/>
    </ligand>
</feature>
<gene>
    <name type="ORF">DDB_G0270104</name>
</gene>
<reference key="1">
    <citation type="journal article" date="2005" name="Nature">
        <title>The genome of the social amoeba Dictyostelium discoideum.</title>
        <authorList>
            <person name="Eichinger L."/>
            <person name="Pachebat J.A."/>
            <person name="Gloeckner G."/>
            <person name="Rajandream M.A."/>
            <person name="Sucgang R."/>
            <person name="Berriman M."/>
            <person name="Song J."/>
            <person name="Olsen R."/>
            <person name="Szafranski K."/>
            <person name="Xu Q."/>
            <person name="Tunggal B."/>
            <person name="Kummerfeld S."/>
            <person name="Madera M."/>
            <person name="Konfortov B.A."/>
            <person name="Rivero F."/>
            <person name="Bankier A.T."/>
            <person name="Lehmann R."/>
            <person name="Hamlin N."/>
            <person name="Davies R."/>
            <person name="Gaudet P."/>
            <person name="Fey P."/>
            <person name="Pilcher K."/>
            <person name="Chen G."/>
            <person name="Saunders D."/>
            <person name="Sodergren E.J."/>
            <person name="Davis P."/>
            <person name="Kerhornou A."/>
            <person name="Nie X."/>
            <person name="Hall N."/>
            <person name="Anjard C."/>
            <person name="Hemphill L."/>
            <person name="Bason N."/>
            <person name="Farbrother P."/>
            <person name="Desany B."/>
            <person name="Just E."/>
            <person name="Morio T."/>
            <person name="Rost R."/>
            <person name="Churcher C.M."/>
            <person name="Cooper J."/>
            <person name="Haydock S."/>
            <person name="van Driessche N."/>
            <person name="Cronin A."/>
            <person name="Goodhead I."/>
            <person name="Muzny D.M."/>
            <person name="Mourier T."/>
            <person name="Pain A."/>
            <person name="Lu M."/>
            <person name="Harper D."/>
            <person name="Lindsay R."/>
            <person name="Hauser H."/>
            <person name="James K.D."/>
            <person name="Quiles M."/>
            <person name="Madan Babu M."/>
            <person name="Saito T."/>
            <person name="Buchrieser C."/>
            <person name="Wardroper A."/>
            <person name="Felder M."/>
            <person name="Thangavelu M."/>
            <person name="Johnson D."/>
            <person name="Knights A."/>
            <person name="Loulseged H."/>
            <person name="Mungall K.L."/>
            <person name="Oliver K."/>
            <person name="Price C."/>
            <person name="Quail M.A."/>
            <person name="Urushihara H."/>
            <person name="Hernandez J."/>
            <person name="Rabbinowitsch E."/>
            <person name="Steffen D."/>
            <person name="Sanders M."/>
            <person name="Ma J."/>
            <person name="Kohara Y."/>
            <person name="Sharp S."/>
            <person name="Simmonds M.N."/>
            <person name="Spiegler S."/>
            <person name="Tivey A."/>
            <person name="Sugano S."/>
            <person name="White B."/>
            <person name="Walker D."/>
            <person name="Woodward J.R."/>
            <person name="Winckler T."/>
            <person name="Tanaka Y."/>
            <person name="Shaulsky G."/>
            <person name="Schleicher M."/>
            <person name="Weinstock G.M."/>
            <person name="Rosenthal A."/>
            <person name="Cox E.C."/>
            <person name="Chisholm R.L."/>
            <person name="Gibbs R.A."/>
            <person name="Loomis W.F."/>
            <person name="Platzer M."/>
            <person name="Kay R.R."/>
            <person name="Williams J.G."/>
            <person name="Dear P.H."/>
            <person name="Noegel A.A."/>
            <person name="Barrell B.G."/>
            <person name="Kuspa A."/>
        </authorList>
    </citation>
    <scope>NUCLEOTIDE SEQUENCE [LARGE SCALE GENOMIC DNA]</scope>
    <source>
        <strain>AX4</strain>
    </source>
</reference>
<protein>
    <recommendedName>
        <fullName>Probable NADH dehydrogenase</fullName>
        <ecNumber>7.1.1.2</ecNumber>
    </recommendedName>
</protein>
<organism>
    <name type="scientific">Dictyostelium discoideum</name>
    <name type="common">Social amoeba</name>
    <dbReference type="NCBI Taxonomy" id="44689"/>
    <lineage>
        <taxon>Eukaryota</taxon>
        <taxon>Amoebozoa</taxon>
        <taxon>Evosea</taxon>
        <taxon>Eumycetozoa</taxon>
        <taxon>Dictyostelia</taxon>
        <taxon>Dictyosteliales</taxon>
        <taxon>Dictyosteliaceae</taxon>
        <taxon>Dictyostelium</taxon>
    </lineage>
</organism>
<accession>Q55CD9</accession>
<keyword id="KW-0274">FAD</keyword>
<keyword id="KW-0285">Flavoprotein</keyword>
<keyword id="KW-0520">NAD</keyword>
<keyword id="KW-0560">Oxidoreductase</keyword>
<keyword id="KW-1185">Reference proteome</keyword>
<keyword id="KW-1278">Translocase</keyword>
<evidence type="ECO:0000250" key="1"/>
<evidence type="ECO:0000305" key="2"/>
<name>NDH_DICDI</name>